<keyword id="KW-0067">ATP-binding</keyword>
<keyword id="KW-0143">Chaperone</keyword>
<keyword id="KW-0547">Nucleotide-binding</keyword>
<keyword id="KW-0597">Phosphoprotein</keyword>
<keyword id="KW-0346">Stress response</keyword>
<name>DNAK_AGGAC</name>
<sequence length="633" mass="68394">MGKIVGIDLGTTNSCVAVMEGEKPRVIENAEGDRTTPSIIAYTNDNETLVGQPAKRQAVTNPKNTLFAIKRLIGRRFEDEEVKRDIDIMPFAITKADNGDAWVEVKGEKLAPPQISAEVLKKMKKAAEDYLGEPVTEAVITVPAYFNDAQRQATKDAGRIAGLDVKRIINEPTAAALAYGLDKGTGNKTIAVYDLGGGTFDLSIIEIDEVGGEKTFEVLATNGDTHLGGEDFDNRIINYLVDEFKKEQGIDLRNDPLAMQRLKEAAEKAKIELSSAQQTDVNLPYITADATGPKHLNIKLTRAKLESLVEDLVAKSLEPVRIALKDAGKSPSEIDDVILVGGQTRMPLVQQEVEKFFGKAPRKDVNPDEAVAIGAAVQGGVLAGDVKDVLLLDVTPLSLGIETMGGVMTTLIEKNTTIPTKKSQVFSTAEDNQSAVTIHVLQGERKQASANKSLGQFNLEGINPVPRGMPQIEVTFDIDADGIIHVSAKDKGTGKEQQITIKSSSGLSDEEIQQMVRDAEANAESDRKFEELVQARNQADHLIHSTRKQLDEAGDKVPAADRGTIESALSDLEKAAKGEDKAVIEAKIKALAEVAQKLAQTAQPHGDPQQAQSNSKPNDDVVDAEFEEVKDNK</sequence>
<protein>
    <recommendedName>
        <fullName>Chaperone protein DnaK</fullName>
    </recommendedName>
    <alternativeName>
        <fullName>HSP70</fullName>
    </alternativeName>
    <alternativeName>
        <fullName>Heat shock 70 kDa protein</fullName>
    </alternativeName>
    <alternativeName>
        <fullName>Heat shock protein 70</fullName>
    </alternativeName>
</protein>
<accession>P71331</accession>
<evidence type="ECO:0000250" key="1"/>
<evidence type="ECO:0000256" key="2">
    <source>
        <dbReference type="SAM" id="MobiDB-lite"/>
    </source>
</evidence>
<evidence type="ECO:0000305" key="3"/>
<comment type="function">
    <text evidence="1">Acts as a chaperone.</text>
</comment>
<comment type="induction">
    <text evidence="1">By stress conditions e.g. heat shock (By similarity).</text>
</comment>
<comment type="similarity">
    <text evidence="3">Belongs to the heat shock protein 70 family.</text>
</comment>
<proteinExistence type="inferred from homology"/>
<reference key="1">
    <citation type="submission" date="1996-09" db="EMBL/GenBank/DDBJ databases">
        <authorList>
            <person name="Yoshida A."/>
            <person name="Nakano Y."/>
            <person name="Yamashita Y."/>
            <person name="Yu H."/>
            <person name="Ohishi M."/>
            <person name="Koga T."/>
        </authorList>
    </citation>
    <scope>NUCLEOTIDE SEQUENCE [GENOMIC DNA]</scope>
    <source>
        <strain>ATCC 43718 / FDC Y4 / Serotype b</strain>
    </source>
</reference>
<gene>
    <name type="primary">dnaK</name>
</gene>
<dbReference type="EMBL" id="D87753">
    <property type="protein sequence ID" value="BAA13454.1"/>
    <property type="molecule type" value="Genomic_DNA"/>
</dbReference>
<dbReference type="RefSeq" id="WP_233115296.1">
    <property type="nucleotide sequence ID" value="NZ_CP085093.1"/>
</dbReference>
<dbReference type="SMR" id="P71331"/>
<dbReference type="STRING" id="714.ACT75_02525"/>
<dbReference type="eggNOG" id="COG0443">
    <property type="taxonomic scope" value="Bacteria"/>
</dbReference>
<dbReference type="GO" id="GO:0005524">
    <property type="term" value="F:ATP binding"/>
    <property type="evidence" value="ECO:0007669"/>
    <property type="project" value="UniProtKB-UniRule"/>
</dbReference>
<dbReference type="GO" id="GO:0140662">
    <property type="term" value="F:ATP-dependent protein folding chaperone"/>
    <property type="evidence" value="ECO:0007669"/>
    <property type="project" value="InterPro"/>
</dbReference>
<dbReference type="GO" id="GO:0051082">
    <property type="term" value="F:unfolded protein binding"/>
    <property type="evidence" value="ECO:0007669"/>
    <property type="project" value="InterPro"/>
</dbReference>
<dbReference type="CDD" id="cd10234">
    <property type="entry name" value="ASKHA_NBD_HSP70_DnaK-like"/>
    <property type="match status" value="1"/>
</dbReference>
<dbReference type="FunFam" id="2.60.34.10:FF:000014">
    <property type="entry name" value="Chaperone protein DnaK HSP70"/>
    <property type="match status" value="1"/>
</dbReference>
<dbReference type="FunFam" id="3.30.30.30:FF:000003">
    <property type="entry name" value="Heat shock protein 9"/>
    <property type="match status" value="1"/>
</dbReference>
<dbReference type="FunFam" id="1.20.1270.10:FF:000001">
    <property type="entry name" value="Molecular chaperone DnaK"/>
    <property type="match status" value="1"/>
</dbReference>
<dbReference type="FunFam" id="3.30.420.40:FF:000004">
    <property type="entry name" value="Molecular chaperone DnaK"/>
    <property type="match status" value="1"/>
</dbReference>
<dbReference type="FunFam" id="3.90.640.10:FF:000003">
    <property type="entry name" value="Molecular chaperone DnaK"/>
    <property type="match status" value="1"/>
</dbReference>
<dbReference type="Gene3D" id="1.20.1270.10">
    <property type="match status" value="1"/>
</dbReference>
<dbReference type="Gene3D" id="3.30.420.40">
    <property type="match status" value="2"/>
</dbReference>
<dbReference type="Gene3D" id="3.90.640.10">
    <property type="entry name" value="Actin, Chain A, domain 4"/>
    <property type="match status" value="1"/>
</dbReference>
<dbReference type="Gene3D" id="2.60.34.10">
    <property type="entry name" value="Substrate Binding Domain Of DNAk, Chain A, domain 1"/>
    <property type="match status" value="1"/>
</dbReference>
<dbReference type="HAMAP" id="MF_00332">
    <property type="entry name" value="DnaK"/>
    <property type="match status" value="1"/>
</dbReference>
<dbReference type="InterPro" id="IPR043129">
    <property type="entry name" value="ATPase_NBD"/>
</dbReference>
<dbReference type="InterPro" id="IPR012725">
    <property type="entry name" value="Chaperone_DnaK"/>
</dbReference>
<dbReference type="InterPro" id="IPR018181">
    <property type="entry name" value="Heat_shock_70_CS"/>
</dbReference>
<dbReference type="InterPro" id="IPR029048">
    <property type="entry name" value="HSP70_C_sf"/>
</dbReference>
<dbReference type="InterPro" id="IPR029047">
    <property type="entry name" value="HSP70_peptide-bd_sf"/>
</dbReference>
<dbReference type="InterPro" id="IPR013126">
    <property type="entry name" value="Hsp_70_fam"/>
</dbReference>
<dbReference type="NCBIfam" id="NF001413">
    <property type="entry name" value="PRK00290.1"/>
    <property type="match status" value="1"/>
</dbReference>
<dbReference type="NCBIfam" id="NF003520">
    <property type="entry name" value="PRK05183.1"/>
    <property type="match status" value="1"/>
</dbReference>
<dbReference type="NCBIfam" id="TIGR02350">
    <property type="entry name" value="prok_dnaK"/>
    <property type="match status" value="1"/>
</dbReference>
<dbReference type="PANTHER" id="PTHR19375">
    <property type="entry name" value="HEAT SHOCK PROTEIN 70KDA"/>
    <property type="match status" value="1"/>
</dbReference>
<dbReference type="Pfam" id="PF00012">
    <property type="entry name" value="HSP70"/>
    <property type="match status" value="1"/>
</dbReference>
<dbReference type="PRINTS" id="PR00301">
    <property type="entry name" value="HEATSHOCK70"/>
</dbReference>
<dbReference type="SUPFAM" id="SSF53067">
    <property type="entry name" value="Actin-like ATPase domain"/>
    <property type="match status" value="2"/>
</dbReference>
<dbReference type="SUPFAM" id="SSF100934">
    <property type="entry name" value="Heat shock protein 70kD (HSP70), C-terminal subdomain"/>
    <property type="match status" value="1"/>
</dbReference>
<dbReference type="SUPFAM" id="SSF100920">
    <property type="entry name" value="Heat shock protein 70kD (HSP70), peptide-binding domain"/>
    <property type="match status" value="1"/>
</dbReference>
<dbReference type="PROSITE" id="PS00297">
    <property type="entry name" value="HSP70_1"/>
    <property type="match status" value="1"/>
</dbReference>
<dbReference type="PROSITE" id="PS00329">
    <property type="entry name" value="HSP70_2"/>
    <property type="match status" value="1"/>
</dbReference>
<dbReference type="PROSITE" id="PS01036">
    <property type="entry name" value="HSP70_3"/>
    <property type="match status" value="1"/>
</dbReference>
<feature type="initiator methionine" description="Removed" evidence="1">
    <location>
        <position position="1"/>
    </location>
</feature>
<feature type="chain" id="PRO_0000078404" description="Chaperone protein DnaK">
    <location>
        <begin position="2"/>
        <end position="633"/>
    </location>
</feature>
<feature type="region of interest" description="Disordered" evidence="2">
    <location>
        <begin position="598"/>
        <end position="633"/>
    </location>
</feature>
<feature type="compositionally biased region" description="Polar residues" evidence="2">
    <location>
        <begin position="598"/>
        <end position="616"/>
    </location>
</feature>
<feature type="modified residue" description="Phosphothreonine; by autocatalysis" evidence="1">
    <location>
        <position position="199"/>
    </location>
</feature>
<organism>
    <name type="scientific">Aggregatibacter actinomycetemcomitans</name>
    <name type="common">Actinobacillus actinomycetemcomitans</name>
    <name type="synonym">Haemophilus actinomycetemcomitans</name>
    <dbReference type="NCBI Taxonomy" id="714"/>
    <lineage>
        <taxon>Bacteria</taxon>
        <taxon>Pseudomonadati</taxon>
        <taxon>Pseudomonadota</taxon>
        <taxon>Gammaproteobacteria</taxon>
        <taxon>Pasteurellales</taxon>
        <taxon>Pasteurellaceae</taxon>
        <taxon>Aggregatibacter</taxon>
    </lineage>
</organism>